<name>LEUC_STAAR</name>
<dbReference type="EC" id="4.2.1.33" evidence="1"/>
<dbReference type="EMBL" id="BX571856">
    <property type="protein sequence ID" value="CAG41127.1"/>
    <property type="molecule type" value="Genomic_DNA"/>
</dbReference>
<dbReference type="RefSeq" id="WP_000531833.1">
    <property type="nucleotide sequence ID" value="NC_002952.2"/>
</dbReference>
<dbReference type="SMR" id="Q6GF14"/>
<dbReference type="KEGG" id="sar:SAR2146"/>
<dbReference type="HOGENOM" id="CLU_006714_3_4_9"/>
<dbReference type="UniPathway" id="UPA00048">
    <property type="reaction ID" value="UER00071"/>
</dbReference>
<dbReference type="Proteomes" id="UP000000596">
    <property type="component" value="Chromosome"/>
</dbReference>
<dbReference type="GO" id="GO:0003861">
    <property type="term" value="F:3-isopropylmalate dehydratase activity"/>
    <property type="evidence" value="ECO:0007669"/>
    <property type="project" value="UniProtKB-UniRule"/>
</dbReference>
<dbReference type="GO" id="GO:0051539">
    <property type="term" value="F:4 iron, 4 sulfur cluster binding"/>
    <property type="evidence" value="ECO:0007669"/>
    <property type="project" value="UniProtKB-KW"/>
</dbReference>
<dbReference type="GO" id="GO:0046872">
    <property type="term" value="F:metal ion binding"/>
    <property type="evidence" value="ECO:0007669"/>
    <property type="project" value="UniProtKB-KW"/>
</dbReference>
<dbReference type="GO" id="GO:0009098">
    <property type="term" value="P:L-leucine biosynthetic process"/>
    <property type="evidence" value="ECO:0007669"/>
    <property type="project" value="UniProtKB-UniRule"/>
</dbReference>
<dbReference type="CDD" id="cd01583">
    <property type="entry name" value="IPMI"/>
    <property type="match status" value="1"/>
</dbReference>
<dbReference type="Gene3D" id="3.30.499.10">
    <property type="entry name" value="Aconitase, domain 3"/>
    <property type="match status" value="2"/>
</dbReference>
<dbReference type="HAMAP" id="MF_01026">
    <property type="entry name" value="LeuC_type1"/>
    <property type="match status" value="1"/>
</dbReference>
<dbReference type="InterPro" id="IPR004430">
    <property type="entry name" value="3-IsopropMal_deHydase_lsu"/>
</dbReference>
<dbReference type="InterPro" id="IPR015931">
    <property type="entry name" value="Acnase/IPM_dHydase_lsu_aba_1/3"/>
</dbReference>
<dbReference type="InterPro" id="IPR001030">
    <property type="entry name" value="Acoase/IPM_deHydtase_lsu_aba"/>
</dbReference>
<dbReference type="InterPro" id="IPR018136">
    <property type="entry name" value="Aconitase_4Fe-4S_BS"/>
</dbReference>
<dbReference type="InterPro" id="IPR036008">
    <property type="entry name" value="Aconitase_4Fe-4S_dom"/>
</dbReference>
<dbReference type="InterPro" id="IPR050067">
    <property type="entry name" value="IPM_dehydratase_rel_enz"/>
</dbReference>
<dbReference type="InterPro" id="IPR033941">
    <property type="entry name" value="IPMI_cat"/>
</dbReference>
<dbReference type="NCBIfam" id="TIGR00170">
    <property type="entry name" value="leuC"/>
    <property type="match status" value="1"/>
</dbReference>
<dbReference type="NCBIfam" id="NF004016">
    <property type="entry name" value="PRK05478.1"/>
    <property type="match status" value="1"/>
</dbReference>
<dbReference type="NCBIfam" id="NF009116">
    <property type="entry name" value="PRK12466.1"/>
    <property type="match status" value="1"/>
</dbReference>
<dbReference type="PANTHER" id="PTHR43822:SF9">
    <property type="entry name" value="3-ISOPROPYLMALATE DEHYDRATASE"/>
    <property type="match status" value="1"/>
</dbReference>
<dbReference type="PANTHER" id="PTHR43822">
    <property type="entry name" value="HOMOACONITASE, MITOCHONDRIAL-RELATED"/>
    <property type="match status" value="1"/>
</dbReference>
<dbReference type="Pfam" id="PF00330">
    <property type="entry name" value="Aconitase"/>
    <property type="match status" value="1"/>
</dbReference>
<dbReference type="PRINTS" id="PR00415">
    <property type="entry name" value="ACONITASE"/>
</dbReference>
<dbReference type="SUPFAM" id="SSF53732">
    <property type="entry name" value="Aconitase iron-sulfur domain"/>
    <property type="match status" value="1"/>
</dbReference>
<dbReference type="PROSITE" id="PS00450">
    <property type="entry name" value="ACONITASE_1"/>
    <property type="match status" value="1"/>
</dbReference>
<dbReference type="PROSITE" id="PS01244">
    <property type="entry name" value="ACONITASE_2"/>
    <property type="match status" value="1"/>
</dbReference>
<keyword id="KW-0004">4Fe-4S</keyword>
<keyword id="KW-0028">Amino-acid biosynthesis</keyword>
<keyword id="KW-0100">Branched-chain amino acid biosynthesis</keyword>
<keyword id="KW-0408">Iron</keyword>
<keyword id="KW-0411">Iron-sulfur</keyword>
<keyword id="KW-0432">Leucine biosynthesis</keyword>
<keyword id="KW-0456">Lyase</keyword>
<keyword id="KW-0479">Metal-binding</keyword>
<protein>
    <recommendedName>
        <fullName evidence="1">3-isopropylmalate dehydratase large subunit</fullName>
        <ecNumber evidence="1">4.2.1.33</ecNumber>
    </recommendedName>
    <alternativeName>
        <fullName evidence="1">Alpha-IPM isomerase</fullName>
        <shortName evidence="1">IPMI</shortName>
    </alternativeName>
    <alternativeName>
        <fullName evidence="1">Isopropylmalate isomerase</fullName>
    </alternativeName>
</protein>
<gene>
    <name evidence="1" type="primary">leuC</name>
    <name type="ordered locus">SAR2146</name>
</gene>
<comment type="function">
    <text evidence="1">Catalyzes the isomerization between 2-isopropylmalate and 3-isopropylmalate, via the formation of 2-isopropylmaleate.</text>
</comment>
<comment type="catalytic activity">
    <reaction evidence="1">
        <text>(2R,3S)-3-isopropylmalate = (2S)-2-isopropylmalate</text>
        <dbReference type="Rhea" id="RHEA:32287"/>
        <dbReference type="ChEBI" id="CHEBI:1178"/>
        <dbReference type="ChEBI" id="CHEBI:35121"/>
        <dbReference type="EC" id="4.2.1.33"/>
    </reaction>
</comment>
<comment type="cofactor">
    <cofactor evidence="1">
        <name>[4Fe-4S] cluster</name>
        <dbReference type="ChEBI" id="CHEBI:49883"/>
    </cofactor>
    <text evidence="1">Binds 1 [4Fe-4S] cluster per subunit.</text>
</comment>
<comment type="pathway">
    <text evidence="1">Amino-acid biosynthesis; L-leucine biosynthesis; L-leucine from 3-methyl-2-oxobutanoate: step 2/4.</text>
</comment>
<comment type="subunit">
    <text evidence="1">Heterodimer of LeuC and LeuD.</text>
</comment>
<comment type="similarity">
    <text evidence="1">Belongs to the aconitase/IPM isomerase family. LeuC type 1 subfamily.</text>
</comment>
<feature type="chain" id="PRO_0000076812" description="3-isopropylmalate dehydratase large subunit">
    <location>
        <begin position="1"/>
        <end position="455"/>
    </location>
</feature>
<feature type="binding site" evidence="1">
    <location>
        <position position="336"/>
    </location>
    <ligand>
        <name>[4Fe-4S] cluster</name>
        <dbReference type="ChEBI" id="CHEBI:49883"/>
    </ligand>
</feature>
<feature type="binding site" evidence="1">
    <location>
        <position position="396"/>
    </location>
    <ligand>
        <name>[4Fe-4S] cluster</name>
        <dbReference type="ChEBI" id="CHEBI:49883"/>
    </ligand>
</feature>
<feature type="binding site" evidence="1">
    <location>
        <position position="399"/>
    </location>
    <ligand>
        <name>[4Fe-4S] cluster</name>
        <dbReference type="ChEBI" id="CHEBI:49883"/>
    </ligand>
</feature>
<sequence>MGQTLFDKVWNRHVLYGKLGEPQLLYIDLHLIHEVTSPQAFEGLRLQNRKLRRPDLTFATLDHNVPTIDIFNIKDEIANKQITTLQKNAIDFGVHIFDMGSDEQGIVHMVGPETGLTQPGKTIVCGDSHTATHGAFGAIAFGIGTSEVEHVFATQTLWQTKPKNLKIDINGTLPTGVYAKDIILHLIKTYGVDFGTGYALEFTGETIKNLSMDGRMTICNMAIEGGAKYGIIQPDDITFEYVKGRPFADNFAKSVDKWRELYSNDDAIFDRVIELDVSTLEPQVTWGTNPEMGVNFSEPFPEINDINDQRAYDYMGLEPGQKAEDIDLGYVFLGSCTNARLSDLIEASHIVKGNKVHPNITAIVVPGSRTVKKEAEKLGLDTIFKNAGFEWREPGCSMCLGMNPDQVPEGVHCASTSNRNFEGRQGKGARTHLVSPAMAAAAIHGKFVDVRKVVV</sequence>
<accession>Q6GF14</accession>
<organism>
    <name type="scientific">Staphylococcus aureus (strain MRSA252)</name>
    <dbReference type="NCBI Taxonomy" id="282458"/>
    <lineage>
        <taxon>Bacteria</taxon>
        <taxon>Bacillati</taxon>
        <taxon>Bacillota</taxon>
        <taxon>Bacilli</taxon>
        <taxon>Bacillales</taxon>
        <taxon>Staphylococcaceae</taxon>
        <taxon>Staphylococcus</taxon>
    </lineage>
</organism>
<reference key="1">
    <citation type="journal article" date="2004" name="Proc. Natl. Acad. Sci. U.S.A.">
        <title>Complete genomes of two clinical Staphylococcus aureus strains: evidence for the rapid evolution of virulence and drug resistance.</title>
        <authorList>
            <person name="Holden M.T.G."/>
            <person name="Feil E.J."/>
            <person name="Lindsay J.A."/>
            <person name="Peacock S.J."/>
            <person name="Day N.P.J."/>
            <person name="Enright M.C."/>
            <person name="Foster T.J."/>
            <person name="Moore C.E."/>
            <person name="Hurst L."/>
            <person name="Atkin R."/>
            <person name="Barron A."/>
            <person name="Bason N."/>
            <person name="Bentley S.D."/>
            <person name="Chillingworth C."/>
            <person name="Chillingworth T."/>
            <person name="Churcher C."/>
            <person name="Clark L."/>
            <person name="Corton C."/>
            <person name="Cronin A."/>
            <person name="Doggett J."/>
            <person name="Dowd L."/>
            <person name="Feltwell T."/>
            <person name="Hance Z."/>
            <person name="Harris B."/>
            <person name="Hauser H."/>
            <person name="Holroyd S."/>
            <person name="Jagels K."/>
            <person name="James K.D."/>
            <person name="Lennard N."/>
            <person name="Line A."/>
            <person name="Mayes R."/>
            <person name="Moule S."/>
            <person name="Mungall K."/>
            <person name="Ormond D."/>
            <person name="Quail M.A."/>
            <person name="Rabbinowitsch E."/>
            <person name="Rutherford K.M."/>
            <person name="Sanders M."/>
            <person name="Sharp S."/>
            <person name="Simmonds M."/>
            <person name="Stevens K."/>
            <person name="Whitehead S."/>
            <person name="Barrell B.G."/>
            <person name="Spratt B.G."/>
            <person name="Parkhill J."/>
        </authorList>
    </citation>
    <scope>NUCLEOTIDE SEQUENCE [LARGE SCALE GENOMIC DNA]</scope>
    <source>
        <strain>MRSA252</strain>
    </source>
</reference>
<proteinExistence type="inferred from homology"/>
<evidence type="ECO:0000255" key="1">
    <source>
        <dbReference type="HAMAP-Rule" id="MF_01026"/>
    </source>
</evidence>